<keyword id="KW-0044">Antibiotic</keyword>
<keyword id="KW-0929">Antimicrobial</keyword>
<keyword id="KW-0053">Apoptosis</keyword>
<keyword id="KW-0204">Cytolysis</keyword>
<keyword id="KW-0903">Direct protein sequencing</keyword>
<keyword id="KW-1015">Disulfide bond</keyword>
<keyword id="KW-0274">FAD</keyword>
<keyword id="KW-0285">Flavoprotein</keyword>
<keyword id="KW-0325">Glycoprotein</keyword>
<keyword id="KW-0354">Hemolysis</keyword>
<keyword id="KW-1199">Hemostasis impairing toxin</keyword>
<keyword id="KW-0560">Oxidoreductase</keyword>
<keyword id="KW-1201">Platelet aggregation inhibiting toxin</keyword>
<keyword id="KW-0964">Secreted</keyword>
<keyword id="KW-0732">Signal</keyword>
<keyword id="KW-0800">Toxin</keyword>
<comment type="function">
    <text evidence="3 4">Catalyzes an oxidative deamination of predominantly hydrophobic and aromatic L-amino acids, thus producing hydrogen peroxide that may contribute to the diverse toxic effects of this enzyme (PubMed:11341935). Shows activity on L-Leu (PubMed:11341935). Exhibits diverse biological activities, such as apoptosis, and inhibition of agonist- and shear stress-induced platelet aggregation (SIPA). Effects of snake L-amino oxidases on platelets are controversial, since they either induce aggregation or inhibit agonist-induced aggregation. These different effects are probably due to different experimental conditions. This protein may also induce hemorrhage, hemolysis, edema, antibacterial and antiparasitic activities.</text>
</comment>
<comment type="catalytic activity">
    <reaction evidence="3">
        <text>an L-alpha-amino acid + O2 + H2O = a 2-oxocarboxylate + H2O2 + NH4(+)</text>
        <dbReference type="Rhea" id="RHEA:13781"/>
        <dbReference type="ChEBI" id="CHEBI:15377"/>
        <dbReference type="ChEBI" id="CHEBI:15379"/>
        <dbReference type="ChEBI" id="CHEBI:16240"/>
        <dbReference type="ChEBI" id="CHEBI:28938"/>
        <dbReference type="ChEBI" id="CHEBI:35179"/>
        <dbReference type="ChEBI" id="CHEBI:59869"/>
        <dbReference type="EC" id="1.4.3.2"/>
    </reaction>
</comment>
<comment type="catalytic activity">
    <reaction evidence="3">
        <text>L-leucine + O2 + H2O = 4-methyl-2-oxopentanoate + H2O2 + NH4(+)</text>
        <dbReference type="Rhea" id="RHEA:60996"/>
        <dbReference type="ChEBI" id="CHEBI:15377"/>
        <dbReference type="ChEBI" id="CHEBI:15379"/>
        <dbReference type="ChEBI" id="CHEBI:16240"/>
        <dbReference type="ChEBI" id="CHEBI:17865"/>
        <dbReference type="ChEBI" id="CHEBI:28938"/>
        <dbReference type="ChEBI" id="CHEBI:57427"/>
    </reaction>
</comment>
<comment type="cofactor">
    <cofactor evidence="1">
        <name>FAD</name>
        <dbReference type="ChEBI" id="CHEBI:57692"/>
    </cofactor>
</comment>
<comment type="subunit">
    <text evidence="4">Homodimer; non-covalently linked.</text>
</comment>
<comment type="subcellular location">
    <subcellularLocation>
        <location evidence="3">Secreted</location>
    </subcellularLocation>
</comment>
<comment type="tissue specificity">
    <text evidence="7">Expressed by the venom gland.</text>
</comment>
<comment type="similarity">
    <text evidence="6">Belongs to the flavin monoamine oxidase family. FIG1 subfamily.</text>
</comment>
<evidence type="ECO:0000250" key="1">
    <source>
        <dbReference type="UniProtKB" id="P81382"/>
    </source>
</evidence>
<evidence type="ECO:0000255" key="2"/>
<evidence type="ECO:0000269" key="3">
    <source>
    </source>
</evidence>
<evidence type="ECO:0000269" key="4">
    <source>
    </source>
</evidence>
<evidence type="ECO:0000303" key="5">
    <source>
    </source>
</evidence>
<evidence type="ECO:0000305" key="6"/>
<evidence type="ECO:0000305" key="7">
    <source>
    </source>
</evidence>
<name>OXLA_GLOBL</name>
<proteinExistence type="evidence at protein level"/>
<sequence length="504" mass="57092">MNVFFMFSLLFLAALGSCADDRNPLEECFRETDYEEFLEIARNGLKATSNPKHVVIVGAGMSGLSAAYVLSGAGHQVTVLEASERAGGRVRTYRNDKEGWYANLGPMRLPEKHRIVREYIRKFGLQLNEFSQENDNAWYFIKNIRKRVGEVKKDPGVLKYPVKPSEEGKSAGQLYEESLGKVVEELKRTNCSYILNKYDTYSTKEYLLKEGNLSPGAVDMIGDLMNEDSGYYVSFPESLRHDDIFAYEKRFDEIVGGMDKLPTSMYRAIEEKVHLNAQVIKIQKNAEKVTVVYQTPAKEMASVTADYVIVCTTSRATRRIKFEPPLPPKKAHALRSVHYRSGTKIFLTCTKKFWEDEGIHGGKSTTDLPSRFIYYPNHNFTSGVGVIIAYGIGDDANFFQALDFKDCADIVINDLSLIHQLPREEIQTFCYPSMIQKWSLDKYAMGGITTFTPYQFQHFSEPLTASVDRIYFAGEHTAEAHGWIDSTIKSGLRAARDVNRASEQ</sequence>
<feature type="signal peptide" evidence="3">
    <location>
        <begin position="1"/>
        <end position="18"/>
    </location>
</feature>
<feature type="chain" id="PRO_5000049916" description="L-amino-acid oxidase">
    <location>
        <begin position="19"/>
        <end position="504"/>
    </location>
</feature>
<feature type="binding site" evidence="1">
    <location>
        <begin position="61"/>
        <end position="62"/>
    </location>
    <ligand>
        <name>FAD</name>
        <dbReference type="ChEBI" id="CHEBI:57692"/>
    </ligand>
</feature>
<feature type="binding site" evidence="1">
    <location>
        <begin position="81"/>
        <end position="82"/>
    </location>
    <ligand>
        <name>FAD</name>
        <dbReference type="ChEBI" id="CHEBI:57692"/>
    </ligand>
</feature>
<feature type="binding site" evidence="1">
    <location>
        <position position="89"/>
    </location>
    <ligand>
        <name>FAD</name>
        <dbReference type="ChEBI" id="CHEBI:57692"/>
    </ligand>
</feature>
<feature type="binding site" evidence="1">
    <location>
        <begin position="105"/>
        <end position="108"/>
    </location>
    <ligand>
        <name>FAD</name>
        <dbReference type="ChEBI" id="CHEBI:57692"/>
    </ligand>
</feature>
<feature type="binding site" evidence="1">
    <location>
        <position position="108"/>
    </location>
    <ligand>
        <name>substrate</name>
    </ligand>
</feature>
<feature type="binding site" evidence="1">
    <location>
        <position position="241"/>
    </location>
    <ligand>
        <name>substrate</name>
    </ligand>
</feature>
<feature type="binding site" evidence="1">
    <location>
        <position position="279"/>
    </location>
    <ligand>
        <name>FAD</name>
        <dbReference type="ChEBI" id="CHEBI:57692"/>
    </ligand>
</feature>
<feature type="binding site" evidence="1">
    <location>
        <position position="390"/>
    </location>
    <ligand>
        <name>substrate</name>
    </ligand>
</feature>
<feature type="binding site" evidence="1">
    <location>
        <position position="475"/>
    </location>
    <ligand>
        <name>FAD</name>
        <dbReference type="ChEBI" id="CHEBI:57692"/>
    </ligand>
</feature>
<feature type="binding site" evidence="1">
    <location>
        <begin position="482"/>
        <end position="487"/>
    </location>
    <ligand>
        <name>FAD</name>
        <dbReference type="ChEBI" id="CHEBI:57692"/>
    </ligand>
</feature>
<feature type="binding site" evidence="1">
    <location>
        <begin position="482"/>
        <end position="483"/>
    </location>
    <ligand>
        <name>substrate</name>
    </ligand>
</feature>
<feature type="glycosylation site" description="N-linked (GlcNAc...) asparagine" evidence="2">
    <location>
        <position position="190"/>
    </location>
</feature>
<feature type="glycosylation site" description="N-linked (GlcNAc...) asparagine" evidence="2">
    <location>
        <position position="379"/>
    </location>
</feature>
<feature type="disulfide bond" evidence="1">
    <location>
        <begin position="28"/>
        <end position="191"/>
    </location>
</feature>
<feature type="disulfide bond" evidence="1">
    <location>
        <begin position="349"/>
        <end position="430"/>
    </location>
</feature>
<organism>
    <name type="scientific">Gloydius blomhoffii</name>
    <name type="common">Mamushi</name>
    <name type="synonym">Agkistrodon halys blomhoffi</name>
    <dbReference type="NCBI Taxonomy" id="242054"/>
    <lineage>
        <taxon>Eukaryota</taxon>
        <taxon>Metazoa</taxon>
        <taxon>Chordata</taxon>
        <taxon>Craniata</taxon>
        <taxon>Vertebrata</taxon>
        <taxon>Euteleostomi</taxon>
        <taxon>Lepidosauria</taxon>
        <taxon>Squamata</taxon>
        <taxon>Bifurcata</taxon>
        <taxon>Unidentata</taxon>
        <taxon>Episquamata</taxon>
        <taxon>Toxicofera</taxon>
        <taxon>Serpentes</taxon>
        <taxon>Colubroidea</taxon>
        <taxon>Viperidae</taxon>
        <taxon>Crotalinae</taxon>
        <taxon>Gloydius</taxon>
    </lineage>
</organism>
<dbReference type="EC" id="1.4.3.2" evidence="3"/>
<dbReference type="EMBL" id="AB072392">
    <property type="protein sequence ID" value="BAB69450.1"/>
    <property type="molecule type" value="mRNA"/>
</dbReference>
<dbReference type="SMR" id="Q90W54"/>
<dbReference type="BRENDA" id="1.4.3.2">
    <property type="organism ID" value="194"/>
</dbReference>
<dbReference type="GO" id="GO:0005576">
    <property type="term" value="C:extracellular region"/>
    <property type="evidence" value="ECO:0007669"/>
    <property type="project" value="UniProtKB-SubCell"/>
</dbReference>
<dbReference type="GO" id="GO:0001716">
    <property type="term" value="F:L-amino-acid oxidase activity"/>
    <property type="evidence" value="ECO:0007669"/>
    <property type="project" value="UniProtKB-EC"/>
</dbReference>
<dbReference type="GO" id="GO:0090729">
    <property type="term" value="F:toxin activity"/>
    <property type="evidence" value="ECO:0007669"/>
    <property type="project" value="UniProtKB-KW"/>
</dbReference>
<dbReference type="GO" id="GO:0009063">
    <property type="term" value="P:amino acid catabolic process"/>
    <property type="evidence" value="ECO:0007669"/>
    <property type="project" value="TreeGrafter"/>
</dbReference>
<dbReference type="GO" id="GO:0006915">
    <property type="term" value="P:apoptotic process"/>
    <property type="evidence" value="ECO:0007669"/>
    <property type="project" value="UniProtKB-KW"/>
</dbReference>
<dbReference type="GO" id="GO:0042742">
    <property type="term" value="P:defense response to bacterium"/>
    <property type="evidence" value="ECO:0007669"/>
    <property type="project" value="UniProtKB-KW"/>
</dbReference>
<dbReference type="GO" id="GO:0031640">
    <property type="term" value="P:killing of cells of another organism"/>
    <property type="evidence" value="ECO:0007669"/>
    <property type="project" value="UniProtKB-KW"/>
</dbReference>
<dbReference type="FunFam" id="1.10.405.10:FF:000004">
    <property type="entry name" value="Amine oxidase"/>
    <property type="match status" value="1"/>
</dbReference>
<dbReference type="FunFam" id="3.50.50.60:FF:000450">
    <property type="entry name" value="Amine oxidase"/>
    <property type="match status" value="1"/>
</dbReference>
<dbReference type="Gene3D" id="3.90.660.10">
    <property type="match status" value="1"/>
</dbReference>
<dbReference type="Gene3D" id="3.50.50.60">
    <property type="entry name" value="FAD/NAD(P)-binding domain"/>
    <property type="match status" value="1"/>
</dbReference>
<dbReference type="Gene3D" id="1.10.405.10">
    <property type="entry name" value="Guanine Nucleotide Dissociation Inhibitor, domain 1"/>
    <property type="match status" value="1"/>
</dbReference>
<dbReference type="InterPro" id="IPR002937">
    <property type="entry name" value="Amino_oxidase"/>
</dbReference>
<dbReference type="InterPro" id="IPR036188">
    <property type="entry name" value="FAD/NAD-bd_sf"/>
</dbReference>
<dbReference type="InterPro" id="IPR001613">
    <property type="entry name" value="Flavin_amine_oxidase"/>
</dbReference>
<dbReference type="InterPro" id="IPR050281">
    <property type="entry name" value="Flavin_monoamine_oxidase"/>
</dbReference>
<dbReference type="PANTHER" id="PTHR10742:SF355">
    <property type="entry name" value="AMINE OXIDASE"/>
    <property type="match status" value="1"/>
</dbReference>
<dbReference type="PANTHER" id="PTHR10742">
    <property type="entry name" value="FLAVIN MONOAMINE OXIDASE"/>
    <property type="match status" value="1"/>
</dbReference>
<dbReference type="Pfam" id="PF01593">
    <property type="entry name" value="Amino_oxidase"/>
    <property type="match status" value="1"/>
</dbReference>
<dbReference type="PRINTS" id="PR00757">
    <property type="entry name" value="AMINEOXDASEF"/>
</dbReference>
<dbReference type="SUPFAM" id="SSF54373">
    <property type="entry name" value="FAD-linked reductases, C-terminal domain"/>
    <property type="match status" value="1"/>
</dbReference>
<dbReference type="SUPFAM" id="SSF51905">
    <property type="entry name" value="FAD/NAD(P)-binding domain"/>
    <property type="match status" value="1"/>
</dbReference>
<accession>Q90W54</accession>
<reference key="1">
    <citation type="journal article" date="2001" name="Biochim. Biophys. Acta">
        <title>Molecular characterization of L-amino acid oxidase from Agkistrodon halys blomhoffii with special reference to platelet aggregation.</title>
        <authorList>
            <person name="Takatsuka H."/>
            <person name="Sakurai Y."/>
            <person name="Yoshioka A."/>
            <person name="Kokubo T."/>
            <person name="Usami Y."/>
            <person name="Suzuki M."/>
            <person name="Matsui T."/>
            <person name="Titani K."/>
            <person name="Yagi H."/>
            <person name="Matsumoto M."/>
            <person name="Fujimura Y."/>
        </authorList>
    </citation>
    <scope>NUCLEOTIDE SEQUENCE [MRNA]</scope>
    <scope>PROTEIN SEQUENCE OF 19-52; 62-104; 226-257; 266-299 AND 435-443</scope>
    <scope>FUNCTION</scope>
    <scope>SUBCELLULAR LOCATION</scope>
    <scope>CATALYTIC ACTIVITY</scope>
    <source>
        <tissue>Venom</tissue>
        <tissue>Venom gland</tissue>
    </source>
</reference>
<reference key="2">
    <citation type="journal article" date="1996" name="Biochem. Biophys. Res. Commun.">
        <title>Identification of the snake venom substance that induces apoptosis.</title>
        <authorList>
            <person name="Suhr S.M."/>
            <person name="Kim D.S."/>
        </authorList>
    </citation>
    <scope>FUNCTION</scope>
    <scope>SUBUNIT</scope>
    <source>
        <tissue>Venom</tissue>
    </source>
</reference>
<protein>
    <recommendedName>
        <fullName>L-amino-acid oxidase</fullName>
        <shortName>LAAO</shortName>
        <shortName evidence="5">M-LAO</shortName>
        <ecNumber evidence="3">1.4.3.2</ecNumber>
    </recommendedName>
</protein>